<evidence type="ECO:0000269" key="1">
    <source>
    </source>
</evidence>
<evidence type="ECO:0000269" key="2">
    <source>
    </source>
</evidence>
<evidence type="ECO:0000269" key="3">
    <source>
    </source>
</evidence>
<evidence type="ECO:0000303" key="4">
    <source>
    </source>
</evidence>
<evidence type="ECO:0000305" key="5"/>
<evidence type="ECO:0000305" key="6">
    <source>
    </source>
</evidence>
<evidence type="ECO:0007744" key="7">
    <source>
        <dbReference type="PDB" id="4X28"/>
    </source>
</evidence>
<evidence type="ECO:0007829" key="8">
    <source>
        <dbReference type="PDB" id="4X28"/>
    </source>
</evidence>
<comment type="function">
    <text evidence="2 3">Involved in the first cycle of side chain dehydrogenation in the beta-oxidation of cholesterol catabolism (PubMed:26161441). It contributes partly to the virulence by increasing the efficiency of beta-oxidation. Catalyzes the dehydrogenation of acyl-CoA ester side chains of (25S)-3-oxo-cholest-4-en-26-oyl-CoA (3-OCS-CoA) to yield (24E)-3-oxo-cholest-4,24-dien-26-oyl-CoA (PubMed:26161441, PubMed:26348625). Also able to dehydrogenate steroyl-CoA such as 3-oxo-chol-4-en-24-oyl-CoA (3-OCO-CoA) as well as 3-oxo-4-pregnene-20-carboxyl-CoA (3-OPC-CoA) (PubMed:26161441). It dehydrogenates only (25S)-OCS-CoA diastereomer (PubMed:26161441, PubMed:26348625).</text>
</comment>
<comment type="catalytic activity">
    <reaction evidence="2">
        <text>(25S)-3-oxocholest-4-en-26-oyl-CoA + A = 3-oxo-cholest-4,24-dien-26-oyl-CoA + AH2</text>
        <dbReference type="Rhea" id="RHEA:46688"/>
        <dbReference type="ChEBI" id="CHEBI:13193"/>
        <dbReference type="ChEBI" id="CHEBI:17499"/>
        <dbReference type="ChEBI" id="CHEBI:83819"/>
        <dbReference type="ChEBI" id="CHEBI:86414"/>
    </reaction>
</comment>
<comment type="cofactor">
    <cofactor evidence="2">
        <name>FAD</name>
        <dbReference type="ChEBI" id="CHEBI:57692"/>
    </cofactor>
    <text evidence="2">Binds 1 FAD per heterodimer.</text>
</comment>
<comment type="activity regulation">
    <text evidence="2">Uncompetitively inhibited by high concentration of 3-OCS-CoA.</text>
</comment>
<comment type="biophysicochemical properties">
    <kinetics>
        <KM evidence="2">2.6 uM for 3-OCO-CoA (at pH 8.5 and 25 degrees Celsius)</KM>
        <KM evidence="2">3.3 uM for 3-OPC-CoA (at pH 8.5 and 25 degrees Celsius)</KM>
        <KM evidence="2">3.4 uM for 3-OCS-CoA (at pH 8.5 and 25 degrees Celsius)</KM>
        <KM evidence="2">4.1 uM for octanoyl-CoA (at pH 8.5 and 25 degrees Celsius)</KM>
        <text evidence="2">kcat is 2.7 sec(-1) for 3-OCS-CoA as substrate (at pH 8.5 and 25 degrees Celsius). kcat is 1.5 sec(-1) for 3-OPC-CoA as substrate (at pH 8.5 and 25 degrees Celsius). kcat is 0.48 sec(-1) for 3-OCO-CoA as substrate (at pH 8.5 and 25 degrees Celsius). kcat is 0.042 sec(-1) for octanoyl-CoA as substrate (at pH 8.5 and 25 degrees Celsius).</text>
    </kinetics>
</comment>
<comment type="pathway">
    <text evidence="6">Steroid metabolism; cholesterol degradation.</text>
</comment>
<comment type="subunit">
    <text evidence="2">Heterotetramer (dimer of heterodimers) composed of FadE26 and FadE27.</text>
</comment>
<comment type="induction">
    <text evidence="1">Induced by cholesterol and repressed by KstR.</text>
</comment>
<comment type="similarity">
    <text evidence="5">Belongs to the acyl-CoA dehydrogenase family.</text>
</comment>
<gene>
    <name type="primary">fadE27</name>
    <name type="ordered locus">Rv3505</name>
</gene>
<proteinExistence type="evidence at protein level"/>
<protein>
    <recommendedName>
        <fullName evidence="4">Acyl-CoA dehydrogenase FadE27</fullName>
        <shortName evidence="4">ACAD</shortName>
        <ecNumber evidence="6">1.3.99.-</ecNumber>
    </recommendedName>
    <alternativeName>
        <fullName evidence="6">3-oxocholest-4-en-26-oyl-CoA dehydrogenase beta subunit</fullName>
    </alternativeName>
</protein>
<organism>
    <name type="scientific">Mycobacterium tuberculosis (strain ATCC 25618 / H37Rv)</name>
    <dbReference type="NCBI Taxonomy" id="83332"/>
    <lineage>
        <taxon>Bacteria</taxon>
        <taxon>Bacillati</taxon>
        <taxon>Actinomycetota</taxon>
        <taxon>Actinomycetes</taxon>
        <taxon>Mycobacteriales</taxon>
        <taxon>Mycobacteriaceae</taxon>
        <taxon>Mycobacterium</taxon>
        <taxon>Mycobacterium tuberculosis complex</taxon>
    </lineage>
</organism>
<name>CHSE5_MYCTU</name>
<accession>I6Y3Q0</accession>
<dbReference type="EC" id="1.3.99.-" evidence="6"/>
<dbReference type="EMBL" id="AL123456">
    <property type="protein sequence ID" value="CCP46327.1"/>
    <property type="molecule type" value="Genomic_DNA"/>
</dbReference>
<dbReference type="RefSeq" id="NP_218022.1">
    <property type="nucleotide sequence ID" value="NC_000962.3"/>
</dbReference>
<dbReference type="RefSeq" id="WP_003419000.1">
    <property type="nucleotide sequence ID" value="NZ_NVQJ01000042.1"/>
</dbReference>
<dbReference type="PDB" id="4X28">
    <property type="method" value="X-ray"/>
    <property type="resolution" value="1.99 A"/>
    <property type="chains" value="C/D=1-373"/>
</dbReference>
<dbReference type="PDBsum" id="4X28"/>
<dbReference type="SMR" id="I6Y3Q0"/>
<dbReference type="FunCoup" id="I6Y3Q0">
    <property type="interactions" value="2"/>
</dbReference>
<dbReference type="STRING" id="83332.Rv3505"/>
<dbReference type="PaxDb" id="83332-Rv3505"/>
<dbReference type="DNASU" id="888248"/>
<dbReference type="GeneID" id="888248"/>
<dbReference type="KEGG" id="mtu:Rv3505"/>
<dbReference type="KEGG" id="mtv:RVBD_3505"/>
<dbReference type="PATRIC" id="fig|83332.111.peg.3903"/>
<dbReference type="TubercuList" id="Rv3505"/>
<dbReference type="eggNOG" id="COG1960">
    <property type="taxonomic scope" value="Bacteria"/>
</dbReference>
<dbReference type="HOGENOM" id="CLU_018204_5_3_11"/>
<dbReference type="InParanoid" id="I6Y3Q0"/>
<dbReference type="OrthoDB" id="4319499at2"/>
<dbReference type="PhylomeDB" id="I6Y3Q0"/>
<dbReference type="BioCyc" id="MetaCyc:G185E-7782-MONOMER"/>
<dbReference type="UniPathway" id="UPA01058"/>
<dbReference type="EvolutionaryTrace" id="I6Y3Q0"/>
<dbReference type="Proteomes" id="UP000001584">
    <property type="component" value="Chromosome"/>
</dbReference>
<dbReference type="GO" id="GO:0003995">
    <property type="term" value="F:acyl-CoA dehydrogenase activity"/>
    <property type="evidence" value="ECO:0000318"/>
    <property type="project" value="GO_Central"/>
</dbReference>
<dbReference type="GO" id="GO:0050660">
    <property type="term" value="F:flavin adenine dinucleotide binding"/>
    <property type="evidence" value="ECO:0007669"/>
    <property type="project" value="InterPro"/>
</dbReference>
<dbReference type="GO" id="GO:0006707">
    <property type="term" value="P:cholesterol catabolic process"/>
    <property type="evidence" value="ECO:0007669"/>
    <property type="project" value="UniProtKB-UniPathway"/>
</dbReference>
<dbReference type="CDD" id="cd00567">
    <property type="entry name" value="ACAD"/>
    <property type="match status" value="1"/>
</dbReference>
<dbReference type="FunFam" id="1.10.540.10:FF:000054">
    <property type="entry name" value="Acyl-CoA dehydrogenase FadE27"/>
    <property type="match status" value="1"/>
</dbReference>
<dbReference type="Gene3D" id="1.10.540.10">
    <property type="entry name" value="Acyl-CoA dehydrogenase/oxidase, N-terminal domain"/>
    <property type="match status" value="1"/>
</dbReference>
<dbReference type="Gene3D" id="2.40.110.10">
    <property type="entry name" value="Butyryl-CoA Dehydrogenase, subunit A, domain 2"/>
    <property type="match status" value="1"/>
</dbReference>
<dbReference type="Gene3D" id="1.20.140.10">
    <property type="entry name" value="Butyryl-CoA Dehydrogenase, subunit A, domain 3"/>
    <property type="match status" value="1"/>
</dbReference>
<dbReference type="InterPro" id="IPR046373">
    <property type="entry name" value="Acyl-CoA_Oxase/DH_mid-dom_sf"/>
</dbReference>
<dbReference type="InterPro" id="IPR036250">
    <property type="entry name" value="AcylCo_DH-like_C"/>
</dbReference>
<dbReference type="InterPro" id="IPR009075">
    <property type="entry name" value="AcylCo_DH/oxidase_C"/>
</dbReference>
<dbReference type="InterPro" id="IPR013786">
    <property type="entry name" value="AcylCoA_DH/ox_N"/>
</dbReference>
<dbReference type="InterPro" id="IPR037069">
    <property type="entry name" value="AcylCoA_DH/ox_N_sf"/>
</dbReference>
<dbReference type="InterPro" id="IPR009100">
    <property type="entry name" value="AcylCoA_DH/oxidase_NM_dom_sf"/>
</dbReference>
<dbReference type="PANTHER" id="PTHR43884">
    <property type="entry name" value="ACYL-COA DEHYDROGENASE"/>
    <property type="match status" value="1"/>
</dbReference>
<dbReference type="PANTHER" id="PTHR43884:SF20">
    <property type="entry name" value="ACYL-COA DEHYDROGENASE FADE28"/>
    <property type="match status" value="1"/>
</dbReference>
<dbReference type="Pfam" id="PF00441">
    <property type="entry name" value="Acyl-CoA_dh_1"/>
    <property type="match status" value="1"/>
</dbReference>
<dbReference type="Pfam" id="PF02771">
    <property type="entry name" value="Acyl-CoA_dh_N"/>
    <property type="match status" value="1"/>
</dbReference>
<dbReference type="SUPFAM" id="SSF47203">
    <property type="entry name" value="Acyl-CoA dehydrogenase C-terminal domain-like"/>
    <property type="match status" value="1"/>
</dbReference>
<dbReference type="SUPFAM" id="SSF56645">
    <property type="entry name" value="Acyl-CoA dehydrogenase NM domain-like"/>
    <property type="match status" value="1"/>
</dbReference>
<feature type="chain" id="PRO_0000438521" description="Acyl-CoA dehydrogenase FadE27">
    <location>
        <begin position="1"/>
        <end position="373"/>
    </location>
</feature>
<feature type="binding site" evidence="2 7">
    <location>
        <position position="251"/>
    </location>
    <ligand>
        <name>FAD</name>
        <dbReference type="ChEBI" id="CHEBI:57692"/>
    </ligand>
</feature>
<feature type="binding site" evidence="2 7">
    <location>
        <position position="327"/>
    </location>
    <ligand>
        <name>FAD</name>
        <dbReference type="ChEBI" id="CHEBI:57692"/>
    </ligand>
</feature>
<feature type="binding site" evidence="2 7">
    <location>
        <position position="331"/>
    </location>
    <ligand>
        <name>FAD</name>
        <dbReference type="ChEBI" id="CHEBI:57692"/>
    </ligand>
</feature>
<feature type="helix" evidence="8">
    <location>
        <begin position="7"/>
        <end position="23"/>
    </location>
</feature>
<feature type="helix" evidence="8">
    <location>
        <begin position="26"/>
        <end position="33"/>
    </location>
</feature>
<feature type="strand" evidence="8">
    <location>
        <begin position="35"/>
        <end position="37"/>
    </location>
</feature>
<feature type="helix" evidence="8">
    <location>
        <begin position="41"/>
        <end position="49"/>
    </location>
</feature>
<feature type="helix" evidence="8">
    <location>
        <begin position="52"/>
        <end position="55"/>
    </location>
</feature>
<feature type="helix" evidence="8">
    <location>
        <begin position="59"/>
        <end position="61"/>
    </location>
</feature>
<feature type="helix" evidence="8">
    <location>
        <begin position="68"/>
        <end position="80"/>
    </location>
</feature>
<feature type="helix" evidence="8">
    <location>
        <begin position="87"/>
        <end position="90"/>
    </location>
</feature>
<feature type="turn" evidence="8">
    <location>
        <begin position="91"/>
        <end position="93"/>
    </location>
</feature>
<feature type="helix" evidence="8">
    <location>
        <begin position="94"/>
        <end position="101"/>
    </location>
</feature>
<feature type="helix" evidence="8">
    <location>
        <begin position="104"/>
        <end position="108"/>
    </location>
</feature>
<feature type="helix" evidence="8">
    <location>
        <begin position="110"/>
        <end position="115"/>
    </location>
</feature>
<feature type="strand" evidence="8">
    <location>
        <begin position="121"/>
        <end position="123"/>
    </location>
</feature>
<feature type="strand" evidence="8">
    <location>
        <begin position="135"/>
        <end position="138"/>
    </location>
</feature>
<feature type="strand" evidence="8">
    <location>
        <begin position="140"/>
        <end position="153"/>
    </location>
</feature>
<feature type="helix" evidence="8">
    <location>
        <begin position="155"/>
        <end position="157"/>
    </location>
</feature>
<feature type="strand" evidence="8">
    <location>
        <begin position="159"/>
        <end position="167"/>
    </location>
</feature>
<feature type="strand" evidence="8">
    <location>
        <begin position="170"/>
        <end position="177"/>
    </location>
</feature>
<feature type="strand" evidence="8">
    <location>
        <begin position="183"/>
        <end position="187"/>
    </location>
</feature>
<feature type="strand" evidence="8">
    <location>
        <begin position="196"/>
        <end position="207"/>
    </location>
</feature>
<feature type="helix" evidence="8">
    <location>
        <begin position="208"/>
        <end position="210"/>
    </location>
</feature>
<feature type="strand" evidence="8">
    <location>
        <begin position="211"/>
        <end position="214"/>
    </location>
</feature>
<feature type="helix" evidence="8">
    <location>
        <begin position="215"/>
        <end position="250"/>
    </location>
</feature>
<feature type="helix" evidence="8">
    <location>
        <begin position="258"/>
        <end position="260"/>
    </location>
</feature>
<feature type="helix" evidence="8">
    <location>
        <begin position="262"/>
        <end position="291"/>
    </location>
</feature>
<feature type="helix" evidence="8">
    <location>
        <begin position="304"/>
        <end position="329"/>
    </location>
</feature>
<feature type="helix" evidence="8">
    <location>
        <begin position="330"/>
        <end position="333"/>
    </location>
</feature>
<feature type="helix" evidence="8">
    <location>
        <begin position="340"/>
        <end position="353"/>
    </location>
</feature>
<feature type="helix" evidence="8">
    <location>
        <begin position="356"/>
        <end position="370"/>
    </location>
</feature>
<keyword id="KW-0002">3D-structure</keyword>
<keyword id="KW-0153">Cholesterol metabolism</keyword>
<keyword id="KW-0274">FAD</keyword>
<keyword id="KW-0285">Flavoprotein</keyword>
<keyword id="KW-0442">Lipid degradation</keyword>
<keyword id="KW-0443">Lipid metabolism</keyword>
<keyword id="KW-0560">Oxidoreductase</keyword>
<keyword id="KW-1185">Reference proteome</keyword>
<keyword id="KW-0753">Steroid metabolism</keyword>
<keyword id="KW-1207">Sterol metabolism</keyword>
<keyword id="KW-0843">Virulence</keyword>
<reference key="1">
    <citation type="journal article" date="1998" name="Nature">
        <title>Deciphering the biology of Mycobacterium tuberculosis from the complete genome sequence.</title>
        <authorList>
            <person name="Cole S.T."/>
            <person name="Brosch R."/>
            <person name="Parkhill J."/>
            <person name="Garnier T."/>
            <person name="Churcher C.M."/>
            <person name="Harris D.E."/>
            <person name="Gordon S.V."/>
            <person name="Eiglmeier K."/>
            <person name="Gas S."/>
            <person name="Barry C.E. III"/>
            <person name="Tekaia F."/>
            <person name="Badcock K."/>
            <person name="Basham D."/>
            <person name="Brown D."/>
            <person name="Chillingworth T."/>
            <person name="Connor R."/>
            <person name="Davies R.M."/>
            <person name="Devlin K."/>
            <person name="Feltwell T."/>
            <person name="Gentles S."/>
            <person name="Hamlin N."/>
            <person name="Holroyd S."/>
            <person name="Hornsby T."/>
            <person name="Jagels K."/>
            <person name="Krogh A."/>
            <person name="McLean J."/>
            <person name="Moule S."/>
            <person name="Murphy L.D."/>
            <person name="Oliver S."/>
            <person name="Osborne J."/>
            <person name="Quail M.A."/>
            <person name="Rajandream M.A."/>
            <person name="Rogers J."/>
            <person name="Rutter S."/>
            <person name="Seeger K."/>
            <person name="Skelton S."/>
            <person name="Squares S."/>
            <person name="Squares R."/>
            <person name="Sulston J.E."/>
            <person name="Taylor K."/>
            <person name="Whitehead S."/>
            <person name="Barrell B.G."/>
        </authorList>
    </citation>
    <scope>NUCLEOTIDE SEQUENCE [LARGE SCALE GENOMIC DNA]</scope>
    <source>
        <strain>ATCC 25618 / H37Rv</strain>
    </source>
</reference>
<reference key="2">
    <citation type="journal article" date="2007" name="Mol. Microbiol.">
        <title>A highly conserved transcriptional repressor controls a large regulon involved in lipid degradation in Mycobacterium smegmatis and Mycobacterium tuberculosis.</title>
        <authorList>
            <person name="Kendall S.L."/>
            <person name="Withers M."/>
            <person name="Soffair C.N."/>
            <person name="Moreland N.J."/>
            <person name="Gurcha S."/>
            <person name="Sidders B."/>
            <person name="Frita R."/>
            <person name="Ten Bokum A."/>
            <person name="Besra G.S."/>
            <person name="Lott J.S."/>
            <person name="Stoker N.G."/>
        </authorList>
    </citation>
    <scope>INDUCTION</scope>
    <source>
        <strain>ATCC 25618 / H37Rv</strain>
    </source>
</reference>
<reference key="3">
    <citation type="journal article" date="2011" name="Mol. Cell. Proteomics">
        <title>Proteogenomic analysis of Mycobacterium tuberculosis by high resolution mass spectrometry.</title>
        <authorList>
            <person name="Kelkar D.S."/>
            <person name="Kumar D."/>
            <person name="Kumar P."/>
            <person name="Balakrishnan L."/>
            <person name="Muthusamy B."/>
            <person name="Yadav A.K."/>
            <person name="Shrivastava P."/>
            <person name="Marimuthu A."/>
            <person name="Anand S."/>
            <person name="Sundaram H."/>
            <person name="Kingsbury R."/>
            <person name="Harsha H.C."/>
            <person name="Nair B."/>
            <person name="Prasad T.S."/>
            <person name="Chauhan D.S."/>
            <person name="Katoch K."/>
            <person name="Katoch V.M."/>
            <person name="Kumar P."/>
            <person name="Chaerkady R."/>
            <person name="Ramachandran S."/>
            <person name="Dash D."/>
            <person name="Pandey A."/>
        </authorList>
    </citation>
    <scope>IDENTIFICATION BY MASS SPECTROMETRY [LARGE SCALE ANALYSIS]</scope>
    <source>
        <strain>ATCC 25618 / H37Rv</strain>
    </source>
</reference>
<reference key="4">
    <citation type="journal article" date="2015" name="Biochemistry">
        <title>Alpha-methyl acyl CoA racemase provides Mycobacterium tuberculosis catabolic access to cholesterol esters.</title>
        <authorList>
            <person name="Lu R."/>
            <person name="Schmitz W."/>
            <person name="Sampson N.S."/>
        </authorList>
    </citation>
    <scope>FUNCTION</scope>
    <scope>SUBSTRATE SPECIFICITY</scope>
</reference>
<reference key="5">
    <citation type="journal article" date="2015" name="ACS Infect. Dis.">
        <title>Unraveling cholesterol catabolism in Mycobacterium tuberculosis: ChsE4-ChsE5 alpha2beta2 acyl-CoA dehydrogenase initiates beta-oxidation of 3-oxo-cholest-4-en-26-oyl CoA.</title>
        <authorList>
            <person name="Yang M."/>
            <person name="Lu R."/>
            <person name="Guja K.E."/>
            <person name="Wipperman M.F."/>
            <person name="St Clair J.R."/>
            <person name="Bonds A.C."/>
            <person name="Garcia-Diaz M."/>
            <person name="Sampson N.S."/>
        </authorList>
    </citation>
    <scope>X-RAY CRYSTALLOGRAPHY (1.99 ANGSTROMS) IN COMPLEX WITH FAD</scope>
    <scope>FUNCTION</scope>
    <scope>CATALYTIC ACTIVITY</scope>
    <scope>BIOPHYSICOCHEMICAL PROPERTIES</scope>
    <scope>COFACTOR</scope>
    <scope>ACTIVITY REGULATION</scope>
    <scope>PATHWAY</scope>
    <scope>SUBSTRATE SPECIFICITY</scope>
    <scope>SUBUNIT</scope>
</reference>
<sequence length="373" mass="39008">MDFTTTEAAQDLGGLVDTIVDAVCTPEHQRELDKLEQRFDRELWRKLIDAGILSSAAPESLGGDGFGVLEQVAVLVALGHQLAAVPYLESVVLAAGALARFGSPELQQGWGVSAVSGDRILTVALDGEMGEGPVQAAGTGHGYRLTGTRTQVGYGPVADAFLVPAETDSGAAVFLVAAGDPGVAVTALATTGLGSVGHLELNGAKVDAARRVGGTDVAVWLGTLSTLSRTAFQLGVLERGLQMTAEYARTREQFDRPIGSFQAVGQRLADGYIDVKGLRLTLTQAAWRVAEDSLASRECPQPADIDVATAGFWAAEAGHRVAHTIVHVHGGVGVDTDHPVHRYFLAAKQTEFALGGATGQLRRIGRELAETPA</sequence>